<organism>
    <name type="scientific">Symbiobacterium thermophilum (strain DSM 24528 / JCM 14929 / IAM 14863 / T)</name>
    <dbReference type="NCBI Taxonomy" id="292459"/>
    <lineage>
        <taxon>Bacteria</taxon>
        <taxon>Bacillati</taxon>
        <taxon>Bacillota</taxon>
        <taxon>Clostridia</taxon>
        <taxon>Eubacteriales</taxon>
        <taxon>Symbiobacteriaceae</taxon>
        <taxon>Symbiobacterium</taxon>
    </lineage>
</organism>
<protein>
    <recommendedName>
        <fullName evidence="1">Ribosomal RNA small subunit methyltransferase H</fullName>
        <ecNumber evidence="1">2.1.1.199</ecNumber>
    </recommendedName>
    <alternativeName>
        <fullName evidence="1">16S rRNA m(4)C1402 methyltransferase</fullName>
    </alternativeName>
    <alternativeName>
        <fullName evidence="1">rRNA (cytosine-N(4)-)-methyltransferase RsmH</fullName>
    </alternativeName>
</protein>
<reference key="1">
    <citation type="journal article" date="2004" name="Nucleic Acids Res.">
        <title>Genome sequence of Symbiobacterium thermophilum, an uncultivable bacterium that depends on microbial commensalism.</title>
        <authorList>
            <person name="Ueda K."/>
            <person name="Yamashita A."/>
            <person name="Ishikawa J."/>
            <person name="Shimada M."/>
            <person name="Watsuji T."/>
            <person name="Morimura K."/>
            <person name="Ikeda H."/>
            <person name="Hattori M."/>
            <person name="Beppu T."/>
        </authorList>
    </citation>
    <scope>NUCLEOTIDE SEQUENCE [LARGE SCALE GENOMIC DNA]</scope>
    <source>
        <strain>DSM 24528 / JCM 14929 / IAM 14863 / T</strain>
    </source>
</reference>
<feature type="chain" id="PRO_0000108727" description="Ribosomal RNA small subunit methyltransferase H">
    <location>
        <begin position="1"/>
        <end position="318"/>
    </location>
</feature>
<feature type="binding site" evidence="1">
    <location>
        <begin position="33"/>
        <end position="35"/>
    </location>
    <ligand>
        <name>S-adenosyl-L-methionine</name>
        <dbReference type="ChEBI" id="CHEBI:59789"/>
    </ligand>
</feature>
<feature type="binding site" evidence="1">
    <location>
        <position position="53"/>
    </location>
    <ligand>
        <name>S-adenosyl-L-methionine</name>
        <dbReference type="ChEBI" id="CHEBI:59789"/>
    </ligand>
</feature>
<feature type="binding site" evidence="1">
    <location>
        <position position="80"/>
    </location>
    <ligand>
        <name>S-adenosyl-L-methionine</name>
        <dbReference type="ChEBI" id="CHEBI:59789"/>
    </ligand>
</feature>
<feature type="binding site" evidence="1">
    <location>
        <position position="101"/>
    </location>
    <ligand>
        <name>S-adenosyl-L-methionine</name>
        <dbReference type="ChEBI" id="CHEBI:59789"/>
    </ligand>
</feature>
<feature type="binding site" evidence="1">
    <location>
        <position position="108"/>
    </location>
    <ligand>
        <name>S-adenosyl-L-methionine</name>
        <dbReference type="ChEBI" id="CHEBI:59789"/>
    </ligand>
</feature>
<keyword id="KW-0963">Cytoplasm</keyword>
<keyword id="KW-0489">Methyltransferase</keyword>
<keyword id="KW-1185">Reference proteome</keyword>
<keyword id="KW-0698">rRNA processing</keyword>
<keyword id="KW-0949">S-adenosyl-L-methionine</keyword>
<keyword id="KW-0808">Transferase</keyword>
<sequence length="318" mass="34830">MAFHHIPVLLQETMEALAVRPGGTYIDCTVGGGGHAAEILRRSSPDGRLIGLDQDENALRAAGDRLAPFGDRVTLVRTNFEHVADVADRLGLGAADGVLMDIGVSSHQFDEGERGFSYHHDAPLDMRMDRTRPLTAAVLVNEWEEEEIARVIREYGEERWASRIAQFIVRARRQRPIETTGQLVEIIKAAIPASARREGGHPARRTFQAIRIAVNDELGALERGLEGALRVLRPGGRLAVITFHSLEDRIVKQTFARWAKPCTCPPDLPVCVCGKAPLAEPVTRKPVRASGAEVKANPRSRSATLRAVVKLQAGEEAK</sequence>
<name>RSMH_SYMTH</name>
<accession>Q67Q57</accession>
<evidence type="ECO:0000255" key="1">
    <source>
        <dbReference type="HAMAP-Rule" id="MF_01007"/>
    </source>
</evidence>
<dbReference type="EC" id="2.1.1.199" evidence="1"/>
<dbReference type="EMBL" id="AP006840">
    <property type="protein sequence ID" value="BAD40186.1"/>
    <property type="molecule type" value="Genomic_DNA"/>
</dbReference>
<dbReference type="RefSeq" id="WP_011195332.1">
    <property type="nucleotide sequence ID" value="NC_006177.1"/>
</dbReference>
<dbReference type="SMR" id="Q67Q57"/>
<dbReference type="STRING" id="292459.STH1201"/>
<dbReference type="KEGG" id="sth:STH1201"/>
<dbReference type="eggNOG" id="COG0275">
    <property type="taxonomic scope" value="Bacteria"/>
</dbReference>
<dbReference type="HOGENOM" id="CLU_038422_2_0_9"/>
<dbReference type="OrthoDB" id="9806637at2"/>
<dbReference type="Proteomes" id="UP000000417">
    <property type="component" value="Chromosome"/>
</dbReference>
<dbReference type="GO" id="GO:0005737">
    <property type="term" value="C:cytoplasm"/>
    <property type="evidence" value="ECO:0007669"/>
    <property type="project" value="UniProtKB-SubCell"/>
</dbReference>
<dbReference type="GO" id="GO:0071424">
    <property type="term" value="F:rRNA (cytosine-N4-)-methyltransferase activity"/>
    <property type="evidence" value="ECO:0007669"/>
    <property type="project" value="UniProtKB-UniRule"/>
</dbReference>
<dbReference type="GO" id="GO:0070475">
    <property type="term" value="P:rRNA base methylation"/>
    <property type="evidence" value="ECO:0007669"/>
    <property type="project" value="UniProtKB-UniRule"/>
</dbReference>
<dbReference type="FunFam" id="1.10.150.170:FF:000001">
    <property type="entry name" value="Ribosomal RNA small subunit methyltransferase H"/>
    <property type="match status" value="1"/>
</dbReference>
<dbReference type="Gene3D" id="1.10.150.170">
    <property type="entry name" value="Putative methyltransferase TM0872, insert domain"/>
    <property type="match status" value="1"/>
</dbReference>
<dbReference type="Gene3D" id="3.40.50.150">
    <property type="entry name" value="Vaccinia Virus protein VP39"/>
    <property type="match status" value="1"/>
</dbReference>
<dbReference type="HAMAP" id="MF_01007">
    <property type="entry name" value="16SrRNA_methyltr_H"/>
    <property type="match status" value="1"/>
</dbReference>
<dbReference type="InterPro" id="IPR002903">
    <property type="entry name" value="RsmH"/>
</dbReference>
<dbReference type="InterPro" id="IPR023397">
    <property type="entry name" value="SAM-dep_MeTrfase_MraW_recog"/>
</dbReference>
<dbReference type="InterPro" id="IPR029063">
    <property type="entry name" value="SAM-dependent_MTases_sf"/>
</dbReference>
<dbReference type="NCBIfam" id="TIGR00006">
    <property type="entry name" value="16S rRNA (cytosine(1402)-N(4))-methyltransferase RsmH"/>
    <property type="match status" value="1"/>
</dbReference>
<dbReference type="PANTHER" id="PTHR11265:SF0">
    <property type="entry name" value="12S RRNA N4-METHYLCYTIDINE METHYLTRANSFERASE"/>
    <property type="match status" value="1"/>
</dbReference>
<dbReference type="PANTHER" id="PTHR11265">
    <property type="entry name" value="S-ADENOSYL-METHYLTRANSFERASE MRAW"/>
    <property type="match status" value="1"/>
</dbReference>
<dbReference type="Pfam" id="PF01795">
    <property type="entry name" value="Methyltransf_5"/>
    <property type="match status" value="1"/>
</dbReference>
<dbReference type="PIRSF" id="PIRSF004486">
    <property type="entry name" value="MraW"/>
    <property type="match status" value="1"/>
</dbReference>
<dbReference type="SUPFAM" id="SSF81799">
    <property type="entry name" value="Putative methyltransferase TM0872, insert domain"/>
    <property type="match status" value="1"/>
</dbReference>
<dbReference type="SUPFAM" id="SSF53335">
    <property type="entry name" value="S-adenosyl-L-methionine-dependent methyltransferases"/>
    <property type="match status" value="1"/>
</dbReference>
<comment type="function">
    <text evidence="1">Specifically methylates the N4 position of cytidine in position 1402 (C1402) of 16S rRNA.</text>
</comment>
<comment type="catalytic activity">
    <reaction evidence="1">
        <text>cytidine(1402) in 16S rRNA + S-adenosyl-L-methionine = N(4)-methylcytidine(1402) in 16S rRNA + S-adenosyl-L-homocysteine + H(+)</text>
        <dbReference type="Rhea" id="RHEA:42928"/>
        <dbReference type="Rhea" id="RHEA-COMP:10286"/>
        <dbReference type="Rhea" id="RHEA-COMP:10287"/>
        <dbReference type="ChEBI" id="CHEBI:15378"/>
        <dbReference type="ChEBI" id="CHEBI:57856"/>
        <dbReference type="ChEBI" id="CHEBI:59789"/>
        <dbReference type="ChEBI" id="CHEBI:74506"/>
        <dbReference type="ChEBI" id="CHEBI:82748"/>
        <dbReference type="EC" id="2.1.1.199"/>
    </reaction>
</comment>
<comment type="subcellular location">
    <subcellularLocation>
        <location evidence="1">Cytoplasm</location>
    </subcellularLocation>
</comment>
<comment type="similarity">
    <text evidence="1">Belongs to the methyltransferase superfamily. RsmH family.</text>
</comment>
<proteinExistence type="inferred from homology"/>
<gene>
    <name evidence="1" type="primary">rsmH</name>
    <name type="synonym">mraW</name>
    <name type="ordered locus">STH1201</name>
</gene>